<reference key="1">
    <citation type="journal article" date="1998" name="DNA Res.">
        <title>Complete sequence and gene organization of the genome of a hyper-thermophilic archaebacterium, Pyrococcus horikoshii OT3.</title>
        <authorList>
            <person name="Kawarabayasi Y."/>
            <person name="Sawada M."/>
            <person name="Horikawa H."/>
            <person name="Haikawa Y."/>
            <person name="Hino Y."/>
            <person name="Yamamoto S."/>
            <person name="Sekine M."/>
            <person name="Baba S."/>
            <person name="Kosugi H."/>
            <person name="Hosoyama A."/>
            <person name="Nagai Y."/>
            <person name="Sakai M."/>
            <person name="Ogura K."/>
            <person name="Otsuka R."/>
            <person name="Nakazawa H."/>
            <person name="Takamiya M."/>
            <person name="Ohfuku Y."/>
            <person name="Funahashi T."/>
            <person name="Tanaka T."/>
            <person name="Kudoh Y."/>
            <person name="Yamazaki J."/>
            <person name="Kushida N."/>
            <person name="Oguchi A."/>
            <person name="Aoki K."/>
            <person name="Yoshizawa T."/>
            <person name="Nakamura Y."/>
            <person name="Robb F.T."/>
            <person name="Horikoshi K."/>
            <person name="Masuchi Y."/>
            <person name="Shizuya H."/>
            <person name="Kikuchi H."/>
        </authorList>
    </citation>
    <scope>NUCLEOTIDE SEQUENCE [LARGE SCALE GENOMIC DNA]</scope>
    <source>
        <strain>ATCC 700860 / DSM 12428 / JCM 9974 / NBRC 100139 / OT-3</strain>
    </source>
</reference>
<sequence>MRIKGVVLSYRRSKENQHTNVMIIKPLDINSREEASKLIGRLVVWKSPSGKVLKGKIVRVHGTRGAVRARFEKGLPGQALGDYVEII</sequence>
<protein>
    <recommendedName>
        <fullName evidence="1">Large ribosomal subunit protein eL33</fullName>
    </recommendedName>
    <alternativeName>
        <fullName evidence="2">50S ribosomal protein L35Ae</fullName>
    </alternativeName>
</protein>
<evidence type="ECO:0000255" key="1">
    <source>
        <dbReference type="HAMAP-Rule" id="MF_00573"/>
    </source>
</evidence>
<evidence type="ECO:0000305" key="2"/>
<name>RL35A_PYRHO</name>
<dbReference type="EMBL" id="BA000001">
    <property type="protein sequence ID" value="BAA30949.1"/>
    <property type="molecule type" value="Genomic_DNA"/>
</dbReference>
<dbReference type="PIR" id="F71194">
    <property type="entry name" value="F71194"/>
</dbReference>
<dbReference type="RefSeq" id="WP_010885889.1">
    <property type="nucleotide sequence ID" value="NC_000961.1"/>
</dbReference>
<dbReference type="SMR" id="O74099"/>
<dbReference type="STRING" id="70601.gene:9378832"/>
<dbReference type="EnsemblBacteria" id="BAA30949">
    <property type="protein sequence ID" value="BAA30949"/>
    <property type="gene ID" value="BAA30949"/>
</dbReference>
<dbReference type="GeneID" id="1442671"/>
<dbReference type="KEGG" id="pho:PHS052"/>
<dbReference type="eggNOG" id="arCOG04304">
    <property type="taxonomic scope" value="Archaea"/>
</dbReference>
<dbReference type="OrthoDB" id="14403at2157"/>
<dbReference type="Proteomes" id="UP000000752">
    <property type="component" value="Chromosome"/>
</dbReference>
<dbReference type="GO" id="GO:1990904">
    <property type="term" value="C:ribonucleoprotein complex"/>
    <property type="evidence" value="ECO:0007669"/>
    <property type="project" value="UniProtKB-KW"/>
</dbReference>
<dbReference type="GO" id="GO:0005840">
    <property type="term" value="C:ribosome"/>
    <property type="evidence" value="ECO:0007669"/>
    <property type="project" value="UniProtKB-KW"/>
</dbReference>
<dbReference type="GO" id="GO:0003735">
    <property type="term" value="F:structural constituent of ribosome"/>
    <property type="evidence" value="ECO:0007669"/>
    <property type="project" value="InterPro"/>
</dbReference>
<dbReference type="GO" id="GO:0006412">
    <property type="term" value="P:translation"/>
    <property type="evidence" value="ECO:0007669"/>
    <property type="project" value="UniProtKB-UniRule"/>
</dbReference>
<dbReference type="Gene3D" id="2.40.10.190">
    <property type="entry name" value="translation elongation factor selb, chain A, domain 4"/>
    <property type="match status" value="1"/>
</dbReference>
<dbReference type="HAMAP" id="MF_00573">
    <property type="entry name" value="Ribosomal_eL33"/>
    <property type="match status" value="1"/>
</dbReference>
<dbReference type="InterPro" id="IPR001780">
    <property type="entry name" value="Ribosomal_eL33"/>
</dbReference>
<dbReference type="InterPro" id="IPR018266">
    <property type="entry name" value="Ribosomal_eL33_CS"/>
</dbReference>
<dbReference type="InterPro" id="IPR038661">
    <property type="entry name" value="Ribosomal_eL33_sf"/>
</dbReference>
<dbReference type="InterPro" id="IPR009000">
    <property type="entry name" value="Transl_B-barrel_sf"/>
</dbReference>
<dbReference type="NCBIfam" id="NF003326">
    <property type="entry name" value="PRK04337.1"/>
    <property type="match status" value="1"/>
</dbReference>
<dbReference type="PANTHER" id="PTHR10902">
    <property type="entry name" value="60S RIBOSOMAL PROTEIN L35A"/>
    <property type="match status" value="1"/>
</dbReference>
<dbReference type="Pfam" id="PF01247">
    <property type="entry name" value="Ribosomal_L35Ae"/>
    <property type="match status" value="1"/>
</dbReference>
<dbReference type="SUPFAM" id="SSF50447">
    <property type="entry name" value="Translation proteins"/>
    <property type="match status" value="1"/>
</dbReference>
<dbReference type="PROSITE" id="PS01105">
    <property type="entry name" value="RIBOSOMAL_L35AE"/>
    <property type="match status" value="1"/>
</dbReference>
<accession>O74099</accession>
<organism>
    <name type="scientific">Pyrococcus horikoshii (strain ATCC 700860 / DSM 12428 / JCM 9974 / NBRC 100139 / OT-3)</name>
    <dbReference type="NCBI Taxonomy" id="70601"/>
    <lineage>
        <taxon>Archaea</taxon>
        <taxon>Methanobacteriati</taxon>
        <taxon>Methanobacteriota</taxon>
        <taxon>Thermococci</taxon>
        <taxon>Thermococcales</taxon>
        <taxon>Thermococcaceae</taxon>
        <taxon>Pyrococcus</taxon>
    </lineage>
</organism>
<gene>
    <name evidence="1" type="primary">rpl35ae</name>
    <name type="ordered locus">PH1829.1</name>
    <name type="ORF">PHS052</name>
</gene>
<keyword id="KW-0687">Ribonucleoprotein</keyword>
<keyword id="KW-0689">Ribosomal protein</keyword>
<comment type="similarity">
    <text evidence="1">Belongs to the eukaryotic ribosomal protein eL33 family.</text>
</comment>
<proteinExistence type="inferred from homology"/>
<feature type="chain" id="PRO_0000192813" description="Large ribosomal subunit protein eL33">
    <location>
        <begin position="1"/>
        <end position="87"/>
    </location>
</feature>